<organism>
    <name type="scientific">Escherichia coli O6:H1 (strain CFT073 / ATCC 700928 / UPEC)</name>
    <dbReference type="NCBI Taxonomy" id="199310"/>
    <lineage>
        <taxon>Bacteria</taxon>
        <taxon>Pseudomonadati</taxon>
        <taxon>Pseudomonadota</taxon>
        <taxon>Gammaproteobacteria</taxon>
        <taxon>Enterobacterales</taxon>
        <taxon>Enterobacteriaceae</taxon>
        <taxon>Escherichia</taxon>
    </lineage>
</organism>
<dbReference type="EMBL" id="AE014075">
    <property type="protein sequence ID" value="AAN83218.1"/>
    <property type="status" value="ALT_INIT"/>
    <property type="molecule type" value="Genomic_DNA"/>
</dbReference>
<dbReference type="RefSeq" id="WP_001295260.1">
    <property type="nucleotide sequence ID" value="NZ_CP051263.1"/>
</dbReference>
<dbReference type="BMRB" id="P69429"/>
<dbReference type="SMR" id="P69429"/>
<dbReference type="STRING" id="199310.c4785"/>
<dbReference type="GeneID" id="93778099"/>
<dbReference type="KEGG" id="ecc:c4785"/>
<dbReference type="eggNOG" id="COG1826">
    <property type="taxonomic scope" value="Bacteria"/>
</dbReference>
<dbReference type="HOGENOM" id="CLU_086034_5_1_6"/>
<dbReference type="Proteomes" id="UP000001410">
    <property type="component" value="Chromosome"/>
</dbReference>
<dbReference type="GO" id="GO:0033281">
    <property type="term" value="C:TAT protein transport complex"/>
    <property type="evidence" value="ECO:0007669"/>
    <property type="project" value="UniProtKB-UniRule"/>
</dbReference>
<dbReference type="GO" id="GO:0008320">
    <property type="term" value="F:protein transmembrane transporter activity"/>
    <property type="evidence" value="ECO:0007669"/>
    <property type="project" value="UniProtKB-UniRule"/>
</dbReference>
<dbReference type="GO" id="GO:0043953">
    <property type="term" value="P:protein transport by the Tat complex"/>
    <property type="evidence" value="ECO:0007669"/>
    <property type="project" value="UniProtKB-UniRule"/>
</dbReference>
<dbReference type="FunFam" id="1.20.5.3310:FF:000001">
    <property type="entry name" value="Probable Sec-independent protein translocase protein TatE"/>
    <property type="match status" value="1"/>
</dbReference>
<dbReference type="Gene3D" id="1.20.5.3310">
    <property type="match status" value="1"/>
</dbReference>
<dbReference type="HAMAP" id="MF_00236">
    <property type="entry name" value="TatA_E"/>
    <property type="match status" value="1"/>
</dbReference>
<dbReference type="InterPro" id="IPR003369">
    <property type="entry name" value="TatA/B/E"/>
</dbReference>
<dbReference type="InterPro" id="IPR006312">
    <property type="entry name" value="TatA/E"/>
</dbReference>
<dbReference type="NCBIfam" id="NF002922">
    <property type="entry name" value="PRK03554.1"/>
    <property type="match status" value="1"/>
</dbReference>
<dbReference type="NCBIfam" id="TIGR01411">
    <property type="entry name" value="tatAE"/>
    <property type="match status" value="1"/>
</dbReference>
<dbReference type="PANTHER" id="PTHR42982">
    <property type="entry name" value="SEC-INDEPENDENT PROTEIN TRANSLOCASE PROTEIN TATA"/>
    <property type="match status" value="1"/>
</dbReference>
<dbReference type="PANTHER" id="PTHR42982:SF1">
    <property type="entry name" value="SEC-INDEPENDENT PROTEIN TRANSLOCASE PROTEIN TATA"/>
    <property type="match status" value="1"/>
</dbReference>
<dbReference type="Pfam" id="PF02416">
    <property type="entry name" value="TatA_B_E"/>
    <property type="match status" value="1"/>
</dbReference>
<evidence type="ECO:0000255" key="1">
    <source>
        <dbReference type="HAMAP-Rule" id="MF_00236"/>
    </source>
</evidence>
<evidence type="ECO:0000256" key="2">
    <source>
        <dbReference type="SAM" id="MobiDB-lite"/>
    </source>
</evidence>
<evidence type="ECO:0000305" key="3"/>
<protein>
    <recommendedName>
        <fullName evidence="1">Sec-independent protein translocase protein TatA</fullName>
    </recommendedName>
</protein>
<name>TATA_ECOL6</name>
<sequence length="89" mass="9664">MGGISIWQLLIIAVIVVLLFGTKKLGSIGSDLGASIKGFKKAMSDDEPKQDKTSQDADFTAKTIADKQADTNQEQAKTEDAKRHDKEQV</sequence>
<accession>P69429</accession>
<accession>O65938</accession>
<accession>P27856</accession>
<comment type="function">
    <text evidence="1">Part of the twin-arginine translocation (Tat) system that transports large folded proteins containing a characteristic twin-arginine motif in their signal peptide across membranes. TatA could form the protein-conducting channel of the Tat system.</text>
</comment>
<comment type="subunit">
    <text evidence="1">The Tat system comprises two distinct complexes: a TatABC complex, containing multiple copies of TatA, TatB and TatC subunits, and a separate TatA complex, containing only TatA subunits. Substrates initially bind to the TatABC complex, which probably triggers association of the separate TatA complex to form the active translocon.</text>
</comment>
<comment type="subcellular location">
    <subcellularLocation>
        <location evidence="1">Cell inner membrane</location>
        <topology evidence="1">Single-pass membrane protein</topology>
    </subcellularLocation>
</comment>
<comment type="similarity">
    <text evidence="1">Belongs to the TatA/E family.</text>
</comment>
<comment type="sequence caution" evidence="3">
    <conflict type="erroneous initiation">
        <sequence resource="EMBL-CDS" id="AAN83218"/>
    </conflict>
</comment>
<proteinExistence type="inferred from homology"/>
<reference key="1">
    <citation type="journal article" date="2002" name="Proc. Natl. Acad. Sci. U.S.A.">
        <title>Extensive mosaic structure revealed by the complete genome sequence of uropathogenic Escherichia coli.</title>
        <authorList>
            <person name="Welch R.A."/>
            <person name="Burland V."/>
            <person name="Plunkett G. III"/>
            <person name="Redford P."/>
            <person name="Roesch P."/>
            <person name="Rasko D."/>
            <person name="Buckles E.L."/>
            <person name="Liou S.-R."/>
            <person name="Boutin A."/>
            <person name="Hackett J."/>
            <person name="Stroud D."/>
            <person name="Mayhew G.F."/>
            <person name="Rose D.J."/>
            <person name="Zhou S."/>
            <person name="Schwartz D.C."/>
            <person name="Perna N.T."/>
            <person name="Mobley H.L.T."/>
            <person name="Donnenberg M.S."/>
            <person name="Blattner F.R."/>
        </authorList>
    </citation>
    <scope>NUCLEOTIDE SEQUENCE [LARGE SCALE GENOMIC DNA]</scope>
    <source>
        <strain>CFT073 / ATCC 700928 / UPEC</strain>
    </source>
</reference>
<gene>
    <name evidence="1" type="primary">tatA</name>
    <name type="synonym">mttA1</name>
    <name type="ordered locus">c4785</name>
</gene>
<feature type="chain" id="PRO_0000097935" description="Sec-independent protein translocase protein TatA">
    <location>
        <begin position="1"/>
        <end position="89"/>
    </location>
</feature>
<feature type="transmembrane region" description="Helical" evidence="1">
    <location>
        <begin position="1"/>
        <end position="21"/>
    </location>
</feature>
<feature type="region of interest" description="Disordered" evidence="2">
    <location>
        <begin position="65"/>
        <end position="89"/>
    </location>
</feature>
<feature type="compositionally biased region" description="Basic and acidic residues" evidence="2">
    <location>
        <begin position="76"/>
        <end position="89"/>
    </location>
</feature>
<keyword id="KW-0997">Cell inner membrane</keyword>
<keyword id="KW-1003">Cell membrane</keyword>
<keyword id="KW-0472">Membrane</keyword>
<keyword id="KW-0653">Protein transport</keyword>
<keyword id="KW-1185">Reference proteome</keyword>
<keyword id="KW-0811">Translocation</keyword>
<keyword id="KW-0812">Transmembrane</keyword>
<keyword id="KW-1133">Transmembrane helix</keyword>
<keyword id="KW-0813">Transport</keyword>